<protein>
    <recommendedName>
        <fullName>Succinate dehydrogenase [ubiquinone] iron-sulfur subunit 3, mitochondrial</fullName>
        <ecNumber>1.3.5.1</ecNumber>
    </recommendedName>
    <alternativeName>
        <fullName>Iron-sulfur subunit of complex II</fullName>
        <shortName>Ip</shortName>
    </alternativeName>
</protein>
<name>SDHB3_ARATH</name>
<sequence>MSSVLRLLGRRICNPAAEKVRLSSSLSGGGDFPILNGHKAAQDLSKDTLKSQDITKEKEGQHKEVKKEFKIYRWNPDKPNSKPFLQSFFVDLSSCGPMVLDVLQKIKAEDDASLSYRRSCREGICGSCSMNIDGTNTVACLKPINPNTSKPTIITPLPHMYVIKDLVVDLTNFYQQYKSMEPWLKTRKPPKDGREHRQSPKDRKKLDGLYECILCACCTTSCPSYWWNPEEFPGPAALLQAYRWISDSRDEYREERLQAITESETKVYRCRAIKNCTATCPKGLNPASAILKMKSKHLLSDPLVRTESV</sequence>
<feature type="transit peptide" description="Mitochondrion" evidence="3">
    <location>
        <begin position="1"/>
        <end position="22"/>
    </location>
</feature>
<feature type="chain" id="PRO_0000247597" description="Succinate dehydrogenase [ubiquinone] iron-sulfur subunit 3, mitochondrial">
    <location>
        <begin position="23"/>
        <end position="309"/>
    </location>
</feature>
<feature type="domain" description="2Fe-2S ferredoxin-type">
    <location>
        <begin position="69"/>
        <end position="160"/>
    </location>
</feature>
<feature type="domain" description="4Fe-4S ferredoxin-type" evidence="4">
    <location>
        <begin position="202"/>
        <end position="232"/>
    </location>
</feature>
<feature type="binding site" evidence="2">
    <location>
        <position position="120"/>
    </location>
    <ligand>
        <name>[2Fe-2S] cluster</name>
        <dbReference type="ChEBI" id="CHEBI:190135"/>
    </ligand>
</feature>
<feature type="binding site" evidence="2">
    <location>
        <position position="125"/>
    </location>
    <ligand>
        <name>[2Fe-2S] cluster</name>
        <dbReference type="ChEBI" id="CHEBI:190135"/>
    </ligand>
</feature>
<feature type="binding site" evidence="2">
    <location>
        <position position="140"/>
    </location>
    <ligand>
        <name>[2Fe-2S] cluster</name>
        <dbReference type="ChEBI" id="CHEBI:190135"/>
    </ligand>
</feature>
<feature type="binding site" evidence="2">
    <location>
        <position position="212"/>
    </location>
    <ligand>
        <name>[4Fe-4S] cluster</name>
        <dbReference type="ChEBI" id="CHEBI:49883"/>
    </ligand>
</feature>
<feature type="binding site" evidence="2">
    <location>
        <position position="215"/>
    </location>
    <ligand>
        <name>[4Fe-4S] cluster</name>
        <dbReference type="ChEBI" id="CHEBI:49883"/>
    </ligand>
</feature>
<feature type="binding site" evidence="2">
    <location>
        <position position="218"/>
    </location>
    <ligand>
        <name>[4Fe-4S] cluster</name>
        <dbReference type="ChEBI" id="CHEBI:49883"/>
    </ligand>
</feature>
<feature type="binding site" evidence="2">
    <location>
        <position position="222"/>
    </location>
    <ligand>
        <name>[3Fe-4S] cluster</name>
        <dbReference type="ChEBI" id="CHEBI:21137"/>
    </ligand>
</feature>
<feature type="binding site" evidence="2">
    <location>
        <position position="227"/>
    </location>
    <ligand>
        <name>a ubiquinone</name>
        <dbReference type="ChEBI" id="CHEBI:16389"/>
        <note>ligand shared with SdhD subunit</note>
    </ligand>
</feature>
<feature type="binding site" evidence="2">
    <location>
        <position position="270"/>
    </location>
    <ligand>
        <name>[3Fe-4S] cluster</name>
        <dbReference type="ChEBI" id="CHEBI:21137"/>
    </ligand>
</feature>
<feature type="binding site" evidence="2">
    <location>
        <position position="276"/>
    </location>
    <ligand>
        <name>[3Fe-4S] cluster</name>
        <dbReference type="ChEBI" id="CHEBI:21137"/>
    </ligand>
</feature>
<feature type="binding site" evidence="2">
    <location>
        <position position="280"/>
    </location>
    <ligand>
        <name>[4Fe-4S] cluster</name>
        <dbReference type="ChEBI" id="CHEBI:49883"/>
    </ligand>
</feature>
<gene>
    <name type="primary">SDH2-3</name>
    <name type="ordered locus">At5g65165</name>
    <name type="ORF">MQN23.10</name>
</gene>
<organism>
    <name type="scientific">Arabidopsis thaliana</name>
    <name type="common">Mouse-ear cress</name>
    <dbReference type="NCBI Taxonomy" id="3702"/>
    <lineage>
        <taxon>Eukaryota</taxon>
        <taxon>Viridiplantae</taxon>
        <taxon>Streptophyta</taxon>
        <taxon>Embryophyta</taxon>
        <taxon>Tracheophyta</taxon>
        <taxon>Spermatophyta</taxon>
        <taxon>Magnoliopsida</taxon>
        <taxon>eudicotyledons</taxon>
        <taxon>Gunneridae</taxon>
        <taxon>Pentapetalae</taxon>
        <taxon>rosids</taxon>
        <taxon>malvids</taxon>
        <taxon>Brassicales</taxon>
        <taxon>Brassicaceae</taxon>
        <taxon>Camelineae</taxon>
        <taxon>Arabidopsis</taxon>
    </lineage>
</organism>
<proteinExistence type="evidence at protein level"/>
<comment type="function">
    <text evidence="1">Iron-sulfur protein (IP) subunit of succinate dehydrogenase (SDH) that is involved in complex II of the mitochondrial electron transport chain and is responsible for transferring electrons from succinate to ubiquinone (coenzyme Q).</text>
</comment>
<comment type="catalytic activity">
    <reaction>
        <text>a quinone + succinate = fumarate + a quinol</text>
        <dbReference type="Rhea" id="RHEA:40523"/>
        <dbReference type="ChEBI" id="CHEBI:24646"/>
        <dbReference type="ChEBI" id="CHEBI:29806"/>
        <dbReference type="ChEBI" id="CHEBI:30031"/>
        <dbReference type="ChEBI" id="CHEBI:132124"/>
        <dbReference type="EC" id="1.3.5.1"/>
    </reaction>
</comment>
<comment type="cofactor">
    <cofactor evidence="2">
        <name>[2Fe-2S] cluster</name>
        <dbReference type="ChEBI" id="CHEBI:190135"/>
    </cofactor>
    <text evidence="2">Binds 1 [2Fe-2S] cluster.</text>
</comment>
<comment type="cofactor">
    <cofactor evidence="2">
        <name>[3Fe-4S] cluster</name>
        <dbReference type="ChEBI" id="CHEBI:21137"/>
    </cofactor>
    <text evidence="2">Binds 1 [3Fe-4S] cluster.</text>
</comment>
<comment type="cofactor">
    <cofactor evidence="2">
        <name>[4Fe-4S] cluster</name>
        <dbReference type="ChEBI" id="CHEBI:49883"/>
    </cofactor>
    <text evidence="2">Binds 1 [4Fe-4S] cluster.</text>
</comment>
<comment type="pathway">
    <text evidence="7">Carbohydrate metabolism; tricarboxylic acid cycle; fumarate from succinate (eukaryal route): step 1/1.</text>
</comment>
<comment type="subunit">
    <text evidence="5">Component of complex II composed of eight subunits in plants: four classical SDH subunits SDH1, SDH2, SDH3 and SDH4 (a flavoprotein (FP), an iron-sulfur protein (IP), and a cytochrome b composed of a large and a small subunit.), as well as four subunits unknown in mitochondria from bacteria and heterotrophic eukaryotes.</text>
</comment>
<comment type="subcellular location">
    <subcellularLocation>
        <location evidence="1">Mitochondrion inner membrane</location>
        <topology evidence="1">Peripheral membrane protein</topology>
        <orientation evidence="1">Matrix side</orientation>
    </subcellularLocation>
</comment>
<comment type="developmental stage">
    <text evidence="6">Expressed during seed development. Detected during seed maturation and decreased during germination.</text>
</comment>
<comment type="similarity">
    <text evidence="7">Belongs to the succinate dehydrogenase/fumarate reductase iron-sulfur protein family.</text>
</comment>
<keyword id="KW-0001">2Fe-2S</keyword>
<keyword id="KW-0003">3Fe-4S</keyword>
<keyword id="KW-0004">4Fe-4S</keyword>
<keyword id="KW-0249">Electron transport</keyword>
<keyword id="KW-0408">Iron</keyword>
<keyword id="KW-0411">Iron-sulfur</keyword>
<keyword id="KW-0472">Membrane</keyword>
<keyword id="KW-0479">Metal-binding</keyword>
<keyword id="KW-0496">Mitochondrion</keyword>
<keyword id="KW-0999">Mitochondrion inner membrane</keyword>
<keyword id="KW-0560">Oxidoreductase</keyword>
<keyword id="KW-1185">Reference proteome</keyword>
<keyword id="KW-0809">Transit peptide</keyword>
<keyword id="KW-0813">Transport</keyword>
<keyword id="KW-0816">Tricarboxylic acid cycle</keyword>
<reference key="1">
    <citation type="journal article" date="2001" name="Plant Mol. Biol.">
        <title>Three different genes encode the iron-sulphur subunit of succinate dehydrogenase in Arabidopsis thaliana.</title>
        <authorList>
            <person name="Figueroa P."/>
            <person name="Leon G."/>
            <person name="Elorza A."/>
            <person name="Holuigue L."/>
            <person name="Jordana X."/>
        </authorList>
    </citation>
    <scope>NUCLEOTIDE SEQUENCE [MRNA]</scope>
    <source>
        <strain>cv. Columbia</strain>
        <tissue>Leaf</tissue>
    </source>
</reference>
<reference key="2">
    <citation type="journal article" date="1998" name="DNA Res.">
        <title>Structural analysis of Arabidopsis thaliana chromosome 5. VI. Sequence features of the regions of 1,367,185 bp covered by 19 physically assigned P1 and TAC clones.</title>
        <authorList>
            <person name="Kotani H."/>
            <person name="Nakamura Y."/>
            <person name="Sato S."/>
            <person name="Asamizu E."/>
            <person name="Kaneko T."/>
            <person name="Miyajima N."/>
            <person name="Tabata S."/>
        </authorList>
    </citation>
    <scope>NUCLEOTIDE SEQUENCE [LARGE SCALE GENOMIC DNA]</scope>
    <source>
        <strain>cv. Columbia</strain>
    </source>
</reference>
<reference key="3">
    <citation type="journal article" date="2017" name="Plant J.">
        <title>Araport11: a complete reannotation of the Arabidopsis thaliana reference genome.</title>
        <authorList>
            <person name="Cheng C.Y."/>
            <person name="Krishnakumar V."/>
            <person name="Chan A.P."/>
            <person name="Thibaud-Nissen F."/>
            <person name="Schobel S."/>
            <person name="Town C.D."/>
        </authorList>
    </citation>
    <scope>GENOME REANNOTATION</scope>
    <source>
        <strain>cv. Columbia</strain>
    </source>
</reference>
<reference key="4">
    <citation type="journal article" date="2006" name="Plant Cell Physiol.">
        <title>A nuclear gene for the iron-sulfur subunit of mitochondrial complex II is specifically expressed during Arabidopsis seed development and germination.</title>
        <authorList>
            <person name="Elorza A."/>
            <person name="Roschzttardtz H."/>
            <person name="Gomez I."/>
            <person name="Mouras A."/>
            <person name="Holuigue L."/>
            <person name="Araya A."/>
            <person name="Jordana X."/>
        </authorList>
    </citation>
    <scope>DEVELOPMENTAL STAGE</scope>
</reference>
<reference key="5">
    <citation type="journal article" date="2004" name="Plant Mol. Biol.">
        <title>Mitochondrial cytochrome c oxidase and succinate dehydrogenase complexes contain plant specific subunits.</title>
        <authorList>
            <person name="Millar A.H."/>
            <person name="Eubel H."/>
            <person name="Jansch L."/>
            <person name="Kruft V."/>
            <person name="Heazlewood J.L."/>
            <person name="Braun H.P."/>
        </authorList>
    </citation>
    <scope>IDENTIFICATION BY MASS SPECTROMETRY</scope>
    <scope>SUBUNIT</scope>
</reference>
<accession>Q9FJP9</accession>
<accession>Q9G3L8</accession>
<evidence type="ECO:0000250" key="1"/>
<evidence type="ECO:0000250" key="2">
    <source>
        <dbReference type="UniProtKB" id="P07014"/>
    </source>
</evidence>
<evidence type="ECO:0000255" key="3"/>
<evidence type="ECO:0000255" key="4">
    <source>
        <dbReference type="PROSITE-ProRule" id="PRU00711"/>
    </source>
</evidence>
<evidence type="ECO:0000269" key="5">
    <source>
    </source>
</evidence>
<evidence type="ECO:0000269" key="6">
    <source>
    </source>
</evidence>
<evidence type="ECO:0000305" key="7"/>
<dbReference type="EC" id="1.3.5.1"/>
<dbReference type="EMBL" id="AJ278912">
    <property type="protein sequence ID" value="CAC19857.1"/>
    <property type="molecule type" value="mRNA"/>
</dbReference>
<dbReference type="EMBL" id="AB013395">
    <property type="protein sequence ID" value="BAB11652.1"/>
    <property type="molecule type" value="Genomic_DNA"/>
</dbReference>
<dbReference type="EMBL" id="CP002688">
    <property type="protein sequence ID" value="AED98011.1"/>
    <property type="molecule type" value="Genomic_DNA"/>
</dbReference>
<dbReference type="RefSeq" id="NP_680465.2">
    <property type="nucleotide sequence ID" value="NM_148160.3"/>
</dbReference>
<dbReference type="SMR" id="Q9FJP9"/>
<dbReference type="BioGRID" id="21882">
    <property type="interactions" value="6"/>
</dbReference>
<dbReference type="FunCoup" id="Q9FJP9">
    <property type="interactions" value="277"/>
</dbReference>
<dbReference type="STRING" id="3702.Q9FJP9"/>
<dbReference type="PaxDb" id="3702-AT5G65165.1"/>
<dbReference type="ProteomicsDB" id="232778"/>
<dbReference type="EnsemblPlants" id="AT5G65165.1">
    <property type="protein sequence ID" value="AT5G65165.1"/>
    <property type="gene ID" value="AT5G65165"/>
</dbReference>
<dbReference type="GeneID" id="836640"/>
<dbReference type="Gramene" id="AT5G65165.1">
    <property type="protein sequence ID" value="AT5G65165.1"/>
    <property type="gene ID" value="AT5G65165"/>
</dbReference>
<dbReference type="KEGG" id="ath:AT5G65165"/>
<dbReference type="Araport" id="AT5G65165"/>
<dbReference type="TAIR" id="AT5G65165">
    <property type="gene designation" value="SDH2-3"/>
</dbReference>
<dbReference type="eggNOG" id="KOG3049">
    <property type="taxonomic scope" value="Eukaryota"/>
</dbReference>
<dbReference type="HOGENOM" id="CLU_044838_0_3_1"/>
<dbReference type="InParanoid" id="Q9FJP9"/>
<dbReference type="OMA" id="MVMVRHA"/>
<dbReference type="OrthoDB" id="1696654at2759"/>
<dbReference type="PhylomeDB" id="Q9FJP9"/>
<dbReference type="UniPathway" id="UPA00223">
    <property type="reaction ID" value="UER01006"/>
</dbReference>
<dbReference type="PRO" id="PR:Q9FJP9"/>
<dbReference type="Proteomes" id="UP000006548">
    <property type="component" value="Chromosome 5"/>
</dbReference>
<dbReference type="ExpressionAtlas" id="Q9FJP9">
    <property type="expression patterns" value="baseline and differential"/>
</dbReference>
<dbReference type="GO" id="GO:0005743">
    <property type="term" value="C:mitochondrial inner membrane"/>
    <property type="evidence" value="ECO:0007669"/>
    <property type="project" value="UniProtKB-SubCell"/>
</dbReference>
<dbReference type="GO" id="GO:0005739">
    <property type="term" value="C:mitochondrion"/>
    <property type="evidence" value="ECO:0000314"/>
    <property type="project" value="TAIR"/>
</dbReference>
<dbReference type="GO" id="GO:0045273">
    <property type="term" value="C:respiratory chain complex II (succinate dehydrogenase)"/>
    <property type="evidence" value="ECO:0000314"/>
    <property type="project" value="UniProtKB"/>
</dbReference>
<dbReference type="GO" id="GO:0051537">
    <property type="term" value="F:2 iron, 2 sulfur cluster binding"/>
    <property type="evidence" value="ECO:0007669"/>
    <property type="project" value="UniProtKB-KW"/>
</dbReference>
<dbReference type="GO" id="GO:0051538">
    <property type="term" value="F:3 iron, 4 sulfur cluster binding"/>
    <property type="evidence" value="ECO:0007669"/>
    <property type="project" value="UniProtKB-KW"/>
</dbReference>
<dbReference type="GO" id="GO:0051539">
    <property type="term" value="F:4 iron, 4 sulfur cluster binding"/>
    <property type="evidence" value="ECO:0007669"/>
    <property type="project" value="UniProtKB-KW"/>
</dbReference>
<dbReference type="GO" id="GO:0009055">
    <property type="term" value="F:electron transfer activity"/>
    <property type="evidence" value="ECO:0000250"/>
    <property type="project" value="TAIR"/>
</dbReference>
<dbReference type="GO" id="GO:0046872">
    <property type="term" value="F:metal ion binding"/>
    <property type="evidence" value="ECO:0007669"/>
    <property type="project" value="UniProtKB-KW"/>
</dbReference>
<dbReference type="GO" id="GO:0008177">
    <property type="term" value="F:succinate dehydrogenase (quinone) activity"/>
    <property type="evidence" value="ECO:0007669"/>
    <property type="project" value="UniProtKB-EC"/>
</dbReference>
<dbReference type="GO" id="GO:0000104">
    <property type="term" value="F:succinate dehydrogenase activity"/>
    <property type="evidence" value="ECO:0000250"/>
    <property type="project" value="TAIR"/>
</dbReference>
<dbReference type="GO" id="GO:0006121">
    <property type="term" value="P:mitochondrial electron transport, succinate to ubiquinone"/>
    <property type="evidence" value="ECO:0000250"/>
    <property type="project" value="TAIR"/>
</dbReference>
<dbReference type="GO" id="GO:0006099">
    <property type="term" value="P:tricarboxylic acid cycle"/>
    <property type="evidence" value="ECO:0007669"/>
    <property type="project" value="UniProtKB-UniPathway"/>
</dbReference>
<dbReference type="FunFam" id="3.10.20.30:FF:000007">
    <property type="entry name" value="Succinate dehydrogenase [ubiquinone] iron-sulfur subunit, mitochondrial"/>
    <property type="match status" value="1"/>
</dbReference>
<dbReference type="FunFam" id="1.10.1060.10:FF:000001">
    <property type="entry name" value="Succinate dehydrogenase iron-sulfur subunit SdhB"/>
    <property type="match status" value="1"/>
</dbReference>
<dbReference type="Gene3D" id="3.10.20.30">
    <property type="match status" value="1"/>
</dbReference>
<dbReference type="Gene3D" id="1.10.1060.10">
    <property type="entry name" value="Alpha-helical ferredoxin"/>
    <property type="match status" value="1"/>
</dbReference>
<dbReference type="InterPro" id="IPR036010">
    <property type="entry name" value="2Fe-2S_ferredoxin-like_sf"/>
</dbReference>
<dbReference type="InterPro" id="IPR006058">
    <property type="entry name" value="2Fe2S_fd_BS"/>
</dbReference>
<dbReference type="InterPro" id="IPR017896">
    <property type="entry name" value="4Fe4S_Fe-S-bd"/>
</dbReference>
<dbReference type="InterPro" id="IPR017900">
    <property type="entry name" value="4Fe4S_Fe_S_CS"/>
</dbReference>
<dbReference type="InterPro" id="IPR012675">
    <property type="entry name" value="Beta-grasp_dom_sf"/>
</dbReference>
<dbReference type="InterPro" id="IPR009051">
    <property type="entry name" value="Helical_ferredxn"/>
</dbReference>
<dbReference type="InterPro" id="IPR050573">
    <property type="entry name" value="SDH/FRD_Iron-Sulfur"/>
</dbReference>
<dbReference type="InterPro" id="IPR004489">
    <property type="entry name" value="Succ_DH/fum_Rdtase_Fe-S"/>
</dbReference>
<dbReference type="InterPro" id="IPR025192">
    <property type="entry name" value="Succ_DH/fum_Rdtase_N"/>
</dbReference>
<dbReference type="NCBIfam" id="TIGR00384">
    <property type="entry name" value="dhsB"/>
    <property type="match status" value="1"/>
</dbReference>
<dbReference type="NCBIfam" id="NF004616">
    <property type="entry name" value="PRK05950.1"/>
    <property type="match status" value="1"/>
</dbReference>
<dbReference type="PANTHER" id="PTHR11921:SF40">
    <property type="entry name" value="SUCCINATE DEHYDROGENASE [UBIQUINONE] IRON-SULFUR SUBUNIT 3, MITOCHONDRIAL"/>
    <property type="match status" value="1"/>
</dbReference>
<dbReference type="PANTHER" id="PTHR11921">
    <property type="entry name" value="SUCCINATE DEHYDROGENASE IRON-SULFUR PROTEIN"/>
    <property type="match status" value="1"/>
</dbReference>
<dbReference type="Pfam" id="PF13085">
    <property type="entry name" value="Fer2_3"/>
    <property type="match status" value="1"/>
</dbReference>
<dbReference type="Pfam" id="PF13534">
    <property type="entry name" value="Fer4_17"/>
    <property type="match status" value="1"/>
</dbReference>
<dbReference type="SUPFAM" id="SSF54292">
    <property type="entry name" value="2Fe-2S ferredoxin-like"/>
    <property type="match status" value="1"/>
</dbReference>
<dbReference type="SUPFAM" id="SSF46548">
    <property type="entry name" value="alpha-helical ferredoxin"/>
    <property type="match status" value="1"/>
</dbReference>
<dbReference type="PROSITE" id="PS00197">
    <property type="entry name" value="2FE2S_FER_1"/>
    <property type="match status" value="1"/>
</dbReference>
<dbReference type="PROSITE" id="PS00198">
    <property type="entry name" value="4FE4S_FER_1"/>
    <property type="match status" value="1"/>
</dbReference>
<dbReference type="PROSITE" id="PS51379">
    <property type="entry name" value="4FE4S_FER_2"/>
    <property type="match status" value="1"/>
</dbReference>